<accession>Q93MV5</accession>
<proteinExistence type="inferred from homology"/>
<gene>
    <name evidence="1" type="primary">kdpB</name>
</gene>
<evidence type="ECO:0000255" key="1">
    <source>
        <dbReference type="HAMAP-Rule" id="MF_00285"/>
    </source>
</evidence>
<evidence type="ECO:0000256" key="2">
    <source>
        <dbReference type="SAM" id="MobiDB-lite"/>
    </source>
</evidence>
<reference key="1">
    <citation type="submission" date="2001-06" db="EMBL/GenBank/DDBJ databases">
        <title>The kdp system of Myxococcus xanthus.</title>
        <authorList>
            <person name="Treuner-Lange A.U."/>
            <person name="Zusman D.R."/>
        </authorList>
    </citation>
    <scope>NUCLEOTIDE SEQUENCE [GENOMIC DNA]</scope>
</reference>
<sequence length="686" mass="72243">MSSPASKPASLLDASLLKPAMVDSLRKLHPRDVARNPVMFVVWAGSLLTTVLVVKDLVAPRPDAAPLGFTVQVTLWLWFTVLFANFAEAVAEGRGKAQAGALRKMRKETTARRWKDGREERVPAPDLRKGDEVICEAGDLIPGDGEVVEGIASVDESAITGESAPVIRESGGDRSAVTGGTKVLSDRIRVRISANPGDSFLDRMIGLVEGAARQKTPNEVALHILLVGLTLIFLLACVTLVPLALYSGVPLSGTAVVALLVCLIPTTIGGLLSAIGIAGMDRLLRKNVLAMSGRAVEAAGDVDTLLLDKTGTITLGNRMATELLPMPGVRMEELAEAAQLASLADETPEGRSIVTLVKDTYKMRPRELQAHHATFVPFTAQTRMSGCDLVDPHPRSIRKGAVDAIVTYVRSQGGAVPDELAQASGRIGDAGGTPLAVADGARLLGIIHLKDVVKGGIKERFDRFRAMGIRTVMITGDNPRTAAAIAREAGVDDFLAEATPEAKLALIRTEQGRGKLVAMTGDGTNDAPALAQADVGVAMNTGTQAAKEAGNMVDLDSNPTKLLEVVEVGKQLLMTHGTLTTFSIANDVAKYFAILPALFMGVFPQIAPLNVMGLSSPFSAVLSAVIFNALIIILLIPLALKGVRYRPLGAEALLRRSLLLYGVGGVIVPFVGIKVIDVLLGAVGLA</sequence>
<protein>
    <recommendedName>
        <fullName evidence="1">Potassium-transporting ATPase ATP-binding subunit</fullName>
        <ecNumber evidence="1">7.2.2.6</ecNumber>
    </recommendedName>
    <alternativeName>
        <fullName evidence="1">ATP phosphohydrolase [potassium-transporting] B chain</fullName>
    </alternativeName>
    <alternativeName>
        <fullName evidence="1">Potassium-binding and translocating subunit B</fullName>
    </alternativeName>
    <alternativeName>
        <fullName evidence="1">Potassium-translocating ATPase B chain</fullName>
    </alternativeName>
</protein>
<keyword id="KW-0067">ATP-binding</keyword>
<keyword id="KW-1003">Cell membrane</keyword>
<keyword id="KW-0406">Ion transport</keyword>
<keyword id="KW-0460">Magnesium</keyword>
<keyword id="KW-0472">Membrane</keyword>
<keyword id="KW-0479">Metal-binding</keyword>
<keyword id="KW-0547">Nucleotide-binding</keyword>
<keyword id="KW-0597">Phosphoprotein</keyword>
<keyword id="KW-0630">Potassium</keyword>
<keyword id="KW-0633">Potassium transport</keyword>
<keyword id="KW-1278">Translocase</keyword>
<keyword id="KW-0812">Transmembrane</keyword>
<keyword id="KW-1133">Transmembrane helix</keyword>
<keyword id="KW-0813">Transport</keyword>
<organism>
    <name type="scientific">Myxococcus xanthus</name>
    <dbReference type="NCBI Taxonomy" id="34"/>
    <lineage>
        <taxon>Bacteria</taxon>
        <taxon>Pseudomonadati</taxon>
        <taxon>Myxococcota</taxon>
        <taxon>Myxococcia</taxon>
        <taxon>Myxococcales</taxon>
        <taxon>Cystobacterineae</taxon>
        <taxon>Myxococcaceae</taxon>
        <taxon>Myxococcus</taxon>
    </lineage>
</organism>
<feature type="chain" id="PRO_0000046127" description="Potassium-transporting ATPase ATP-binding subunit">
    <location>
        <begin position="1"/>
        <end position="686"/>
    </location>
</feature>
<feature type="transmembrane region" description="Helical" evidence="1">
    <location>
        <begin position="38"/>
        <end position="58"/>
    </location>
</feature>
<feature type="transmembrane region" description="Helical" evidence="1">
    <location>
        <begin position="64"/>
        <end position="84"/>
    </location>
</feature>
<feature type="transmembrane region" description="Helical" evidence="1">
    <location>
        <begin position="224"/>
        <end position="244"/>
    </location>
</feature>
<feature type="transmembrane region" description="Helical" evidence="1">
    <location>
        <begin position="257"/>
        <end position="277"/>
    </location>
</feature>
<feature type="transmembrane region" description="Helical" evidence="1">
    <location>
        <begin position="592"/>
        <end position="612"/>
    </location>
</feature>
<feature type="transmembrane region" description="Helical" evidence="1">
    <location>
        <begin position="620"/>
        <end position="640"/>
    </location>
</feature>
<feature type="transmembrane region" description="Helical" evidence="1">
    <location>
        <begin position="666"/>
        <end position="686"/>
    </location>
</feature>
<feature type="region of interest" description="Disordered" evidence="2">
    <location>
        <begin position="101"/>
        <end position="123"/>
    </location>
</feature>
<feature type="compositionally biased region" description="Basic and acidic residues" evidence="2">
    <location>
        <begin position="107"/>
        <end position="123"/>
    </location>
</feature>
<feature type="active site" description="4-aspartylphosphate intermediate" evidence="1">
    <location>
        <position position="308"/>
    </location>
</feature>
<feature type="binding site" evidence="1">
    <location>
        <position position="345"/>
    </location>
    <ligand>
        <name>ATP</name>
        <dbReference type="ChEBI" id="CHEBI:30616"/>
    </ligand>
</feature>
<feature type="binding site" evidence="1">
    <location>
        <position position="349"/>
    </location>
    <ligand>
        <name>ATP</name>
        <dbReference type="ChEBI" id="CHEBI:30616"/>
    </ligand>
</feature>
<feature type="binding site" evidence="1">
    <location>
        <begin position="378"/>
        <end position="385"/>
    </location>
    <ligand>
        <name>ATP</name>
        <dbReference type="ChEBI" id="CHEBI:30616"/>
    </ligand>
</feature>
<feature type="binding site" evidence="1">
    <location>
        <position position="399"/>
    </location>
    <ligand>
        <name>ATP</name>
        <dbReference type="ChEBI" id="CHEBI:30616"/>
    </ligand>
</feature>
<feature type="binding site" evidence="1">
    <location>
        <position position="522"/>
    </location>
    <ligand>
        <name>Mg(2+)</name>
        <dbReference type="ChEBI" id="CHEBI:18420"/>
    </ligand>
</feature>
<feature type="binding site" evidence="1">
    <location>
        <position position="526"/>
    </location>
    <ligand>
        <name>Mg(2+)</name>
        <dbReference type="ChEBI" id="CHEBI:18420"/>
    </ligand>
</feature>
<comment type="function">
    <text evidence="1">Part of the high-affinity ATP-driven potassium transport (or Kdp) system, which catalyzes the hydrolysis of ATP coupled with the electrogenic transport of potassium into the cytoplasm. This subunit is responsible for energy coupling to the transport system and for the release of the potassium ions to the cytoplasm.</text>
</comment>
<comment type="catalytic activity">
    <reaction evidence="1">
        <text>K(+)(out) + ATP + H2O = K(+)(in) + ADP + phosphate + H(+)</text>
        <dbReference type="Rhea" id="RHEA:16777"/>
        <dbReference type="ChEBI" id="CHEBI:15377"/>
        <dbReference type="ChEBI" id="CHEBI:15378"/>
        <dbReference type="ChEBI" id="CHEBI:29103"/>
        <dbReference type="ChEBI" id="CHEBI:30616"/>
        <dbReference type="ChEBI" id="CHEBI:43474"/>
        <dbReference type="ChEBI" id="CHEBI:456216"/>
        <dbReference type="EC" id="7.2.2.6"/>
    </reaction>
    <physiologicalReaction direction="left-to-right" evidence="1">
        <dbReference type="Rhea" id="RHEA:16778"/>
    </physiologicalReaction>
</comment>
<comment type="subunit">
    <text evidence="1">The system is composed of three essential subunits: KdpA, KdpB and KdpC.</text>
</comment>
<comment type="subcellular location">
    <subcellularLocation>
        <location evidence="1">Cell membrane</location>
        <topology evidence="1">Multi-pass membrane protein</topology>
    </subcellularLocation>
</comment>
<comment type="similarity">
    <text evidence="1">Belongs to the cation transport ATPase (P-type) (TC 3.A.3) family. Type IA subfamily.</text>
</comment>
<name>KDPB_MYXXA</name>
<dbReference type="EC" id="7.2.2.6" evidence="1"/>
<dbReference type="EMBL" id="AF395108">
    <property type="protein sequence ID" value="AAK81844.1"/>
    <property type="molecule type" value="Genomic_DNA"/>
</dbReference>
<dbReference type="SMR" id="Q93MV5"/>
<dbReference type="GO" id="GO:0005886">
    <property type="term" value="C:plasma membrane"/>
    <property type="evidence" value="ECO:0007669"/>
    <property type="project" value="UniProtKB-SubCell"/>
</dbReference>
<dbReference type="GO" id="GO:0005524">
    <property type="term" value="F:ATP binding"/>
    <property type="evidence" value="ECO:0007669"/>
    <property type="project" value="UniProtKB-UniRule"/>
</dbReference>
<dbReference type="GO" id="GO:0016887">
    <property type="term" value="F:ATP hydrolysis activity"/>
    <property type="evidence" value="ECO:0007669"/>
    <property type="project" value="InterPro"/>
</dbReference>
<dbReference type="GO" id="GO:0000287">
    <property type="term" value="F:magnesium ion binding"/>
    <property type="evidence" value="ECO:0007669"/>
    <property type="project" value="UniProtKB-UniRule"/>
</dbReference>
<dbReference type="GO" id="GO:0008556">
    <property type="term" value="F:P-type potassium transmembrane transporter activity"/>
    <property type="evidence" value="ECO:0007669"/>
    <property type="project" value="UniProtKB-UniRule"/>
</dbReference>
<dbReference type="CDD" id="cd02078">
    <property type="entry name" value="P-type_ATPase_K"/>
    <property type="match status" value="1"/>
</dbReference>
<dbReference type="FunFam" id="2.70.150.10:FF:000033">
    <property type="entry name" value="Potassium-transporting ATPase ATP-binding subunit"/>
    <property type="match status" value="1"/>
</dbReference>
<dbReference type="FunFam" id="3.40.1110.10:FF:000007">
    <property type="entry name" value="Potassium-transporting ATPase ATP-binding subunit"/>
    <property type="match status" value="1"/>
</dbReference>
<dbReference type="Gene3D" id="3.40.1110.10">
    <property type="entry name" value="Calcium-transporting ATPase, cytoplasmic domain N"/>
    <property type="match status" value="1"/>
</dbReference>
<dbReference type="Gene3D" id="2.70.150.10">
    <property type="entry name" value="Calcium-transporting ATPase, cytoplasmic transduction domain A"/>
    <property type="match status" value="1"/>
</dbReference>
<dbReference type="Gene3D" id="3.40.50.1000">
    <property type="entry name" value="HAD superfamily/HAD-like"/>
    <property type="match status" value="1"/>
</dbReference>
<dbReference type="HAMAP" id="MF_00285">
    <property type="entry name" value="KdpB"/>
    <property type="match status" value="1"/>
</dbReference>
<dbReference type="InterPro" id="IPR023299">
    <property type="entry name" value="ATPase_P-typ_cyto_dom_N"/>
</dbReference>
<dbReference type="InterPro" id="IPR018303">
    <property type="entry name" value="ATPase_P-typ_P_site"/>
</dbReference>
<dbReference type="InterPro" id="IPR023298">
    <property type="entry name" value="ATPase_P-typ_TM_dom_sf"/>
</dbReference>
<dbReference type="InterPro" id="IPR008250">
    <property type="entry name" value="ATPase_P-typ_transduc_dom_A_sf"/>
</dbReference>
<dbReference type="InterPro" id="IPR036412">
    <property type="entry name" value="HAD-like_sf"/>
</dbReference>
<dbReference type="InterPro" id="IPR023214">
    <property type="entry name" value="HAD_sf"/>
</dbReference>
<dbReference type="InterPro" id="IPR006391">
    <property type="entry name" value="P-type_ATPase_bsu_IA"/>
</dbReference>
<dbReference type="InterPro" id="IPR001757">
    <property type="entry name" value="P_typ_ATPase"/>
</dbReference>
<dbReference type="InterPro" id="IPR044492">
    <property type="entry name" value="P_typ_ATPase_HD_dom"/>
</dbReference>
<dbReference type="NCBIfam" id="TIGR01494">
    <property type="entry name" value="ATPase_P-type"/>
    <property type="match status" value="2"/>
</dbReference>
<dbReference type="NCBIfam" id="TIGR01497">
    <property type="entry name" value="kdpB"/>
    <property type="match status" value="1"/>
</dbReference>
<dbReference type="PANTHER" id="PTHR43743">
    <property type="entry name" value="POTASSIUM-TRANSPORTING ATPASE ATP-BINDING SUBUNIT"/>
    <property type="match status" value="1"/>
</dbReference>
<dbReference type="PANTHER" id="PTHR43743:SF1">
    <property type="entry name" value="POTASSIUM-TRANSPORTING ATPASE ATP-BINDING SUBUNIT"/>
    <property type="match status" value="1"/>
</dbReference>
<dbReference type="Pfam" id="PF00122">
    <property type="entry name" value="E1-E2_ATPase"/>
    <property type="match status" value="1"/>
</dbReference>
<dbReference type="Pfam" id="PF00702">
    <property type="entry name" value="Hydrolase"/>
    <property type="match status" value="1"/>
</dbReference>
<dbReference type="PRINTS" id="PR00119">
    <property type="entry name" value="CATATPASE"/>
</dbReference>
<dbReference type="SFLD" id="SFLDG00002">
    <property type="entry name" value="C1.7:_P-type_atpase_like"/>
    <property type="match status" value="1"/>
</dbReference>
<dbReference type="SFLD" id="SFLDF00027">
    <property type="entry name" value="p-type_atpase"/>
    <property type="match status" value="1"/>
</dbReference>
<dbReference type="SUPFAM" id="SSF81653">
    <property type="entry name" value="Calcium ATPase, transduction domain A"/>
    <property type="match status" value="1"/>
</dbReference>
<dbReference type="SUPFAM" id="SSF81665">
    <property type="entry name" value="Calcium ATPase, transmembrane domain M"/>
    <property type="match status" value="1"/>
</dbReference>
<dbReference type="SUPFAM" id="SSF56784">
    <property type="entry name" value="HAD-like"/>
    <property type="match status" value="1"/>
</dbReference>
<dbReference type="PROSITE" id="PS00154">
    <property type="entry name" value="ATPASE_E1_E2"/>
    <property type="match status" value="1"/>
</dbReference>